<reference key="1">
    <citation type="submission" date="2007-10" db="EMBL/GenBank/DDBJ databases">
        <title>Complete sequence of Salinispora arenicola CNS-205.</title>
        <authorList>
            <consortium name="US DOE Joint Genome Institute"/>
            <person name="Copeland A."/>
            <person name="Lucas S."/>
            <person name="Lapidus A."/>
            <person name="Barry K."/>
            <person name="Glavina del Rio T."/>
            <person name="Dalin E."/>
            <person name="Tice H."/>
            <person name="Pitluck S."/>
            <person name="Foster B."/>
            <person name="Schmutz J."/>
            <person name="Larimer F."/>
            <person name="Land M."/>
            <person name="Hauser L."/>
            <person name="Kyrpides N."/>
            <person name="Ivanova N."/>
            <person name="Jensen P.R."/>
            <person name="Moore B.S."/>
            <person name="Penn K."/>
            <person name="Jenkins C."/>
            <person name="Udwary D."/>
            <person name="Xiang L."/>
            <person name="Gontang E."/>
            <person name="Richardson P."/>
        </authorList>
    </citation>
    <scope>NUCLEOTIDE SEQUENCE [LARGE SCALE GENOMIC DNA]</scope>
    <source>
        <strain>CNS-205</strain>
    </source>
</reference>
<keyword id="KW-0687">Ribonucleoprotein</keyword>
<keyword id="KW-0689">Ribosomal protein</keyword>
<keyword id="KW-0694">RNA-binding</keyword>
<keyword id="KW-0699">rRNA-binding</keyword>
<proteinExistence type="inferred from homology"/>
<accession>A8M526</accession>
<sequence length="279" mass="30535">MAIRKYRPTTPGRRGSSVADFAEITRSTPEKSLLAPLPKKGGRNAHGRITTRHQGGGHKRQYRIIDFKRVDKDGVPAKVAHIEYDPNRTARIALLHFLDGEKRYIVAPKDLKQGDIVESGPGADIKPGNNLPLRNIPVGTTIHNVELRPGGGAKLARSAGVGIQLLGREGAYATLRMPSGEIRRVDVRCRASIGEIGNADQSNINWGKAGRMRWKGKRPTVRGVAMNPVDHPHGGGEGKTSGGRHPVNPQGKPEGRTRRKGQPSDRLIVRRRYATRKRG</sequence>
<comment type="function">
    <text evidence="1">One of the primary rRNA binding proteins. Required for association of the 30S and 50S subunits to form the 70S ribosome, for tRNA binding and peptide bond formation. It has been suggested to have peptidyltransferase activity; this is somewhat controversial. Makes several contacts with the 16S rRNA in the 70S ribosome.</text>
</comment>
<comment type="subunit">
    <text evidence="1">Part of the 50S ribosomal subunit. Forms a bridge to the 30S subunit in the 70S ribosome.</text>
</comment>
<comment type="similarity">
    <text evidence="1">Belongs to the universal ribosomal protein uL2 family.</text>
</comment>
<name>RL2_SALAI</name>
<organism>
    <name type="scientific">Salinispora arenicola (strain CNS-205)</name>
    <dbReference type="NCBI Taxonomy" id="391037"/>
    <lineage>
        <taxon>Bacteria</taxon>
        <taxon>Bacillati</taxon>
        <taxon>Actinomycetota</taxon>
        <taxon>Actinomycetes</taxon>
        <taxon>Micromonosporales</taxon>
        <taxon>Micromonosporaceae</taxon>
        <taxon>Salinispora</taxon>
    </lineage>
</organism>
<protein>
    <recommendedName>
        <fullName evidence="1">Large ribosomal subunit protein uL2</fullName>
    </recommendedName>
    <alternativeName>
        <fullName evidence="3">50S ribosomal protein L2</fullName>
    </alternativeName>
</protein>
<feature type="chain" id="PRO_1000086347" description="Large ribosomal subunit protein uL2">
    <location>
        <begin position="1"/>
        <end position="279"/>
    </location>
</feature>
<feature type="region of interest" description="Disordered" evidence="2">
    <location>
        <begin position="33"/>
        <end position="58"/>
    </location>
</feature>
<feature type="region of interest" description="Disordered" evidence="2">
    <location>
        <begin position="223"/>
        <end position="279"/>
    </location>
</feature>
<feature type="compositionally biased region" description="Basic residues" evidence="2">
    <location>
        <begin position="40"/>
        <end position="58"/>
    </location>
</feature>
<feature type="compositionally biased region" description="Basic residues" evidence="2">
    <location>
        <begin position="269"/>
        <end position="279"/>
    </location>
</feature>
<dbReference type="EMBL" id="CP000850">
    <property type="protein sequence ID" value="ABW00094.1"/>
    <property type="molecule type" value="Genomic_DNA"/>
</dbReference>
<dbReference type="SMR" id="A8M526"/>
<dbReference type="STRING" id="391037.Sare_4312"/>
<dbReference type="KEGG" id="saq:Sare_4312"/>
<dbReference type="PATRIC" id="fig|391037.6.peg.4353"/>
<dbReference type="eggNOG" id="COG0090">
    <property type="taxonomic scope" value="Bacteria"/>
</dbReference>
<dbReference type="HOGENOM" id="CLU_036235_2_1_11"/>
<dbReference type="OrthoDB" id="9778722at2"/>
<dbReference type="GO" id="GO:0015934">
    <property type="term" value="C:large ribosomal subunit"/>
    <property type="evidence" value="ECO:0007669"/>
    <property type="project" value="InterPro"/>
</dbReference>
<dbReference type="GO" id="GO:0019843">
    <property type="term" value="F:rRNA binding"/>
    <property type="evidence" value="ECO:0007669"/>
    <property type="project" value="UniProtKB-UniRule"/>
</dbReference>
<dbReference type="GO" id="GO:0003735">
    <property type="term" value="F:structural constituent of ribosome"/>
    <property type="evidence" value="ECO:0007669"/>
    <property type="project" value="InterPro"/>
</dbReference>
<dbReference type="GO" id="GO:0016740">
    <property type="term" value="F:transferase activity"/>
    <property type="evidence" value="ECO:0007669"/>
    <property type="project" value="InterPro"/>
</dbReference>
<dbReference type="GO" id="GO:0002181">
    <property type="term" value="P:cytoplasmic translation"/>
    <property type="evidence" value="ECO:0007669"/>
    <property type="project" value="TreeGrafter"/>
</dbReference>
<dbReference type="FunFam" id="2.30.30.30:FF:000001">
    <property type="entry name" value="50S ribosomal protein L2"/>
    <property type="match status" value="1"/>
</dbReference>
<dbReference type="FunFam" id="2.40.50.140:FF:000003">
    <property type="entry name" value="50S ribosomal protein L2"/>
    <property type="match status" value="1"/>
</dbReference>
<dbReference type="FunFam" id="4.10.950.10:FF:000001">
    <property type="entry name" value="50S ribosomal protein L2"/>
    <property type="match status" value="1"/>
</dbReference>
<dbReference type="Gene3D" id="2.30.30.30">
    <property type="match status" value="1"/>
</dbReference>
<dbReference type="Gene3D" id="2.40.50.140">
    <property type="entry name" value="Nucleic acid-binding proteins"/>
    <property type="match status" value="1"/>
</dbReference>
<dbReference type="Gene3D" id="4.10.950.10">
    <property type="entry name" value="Ribosomal protein L2, domain 3"/>
    <property type="match status" value="1"/>
</dbReference>
<dbReference type="HAMAP" id="MF_01320_B">
    <property type="entry name" value="Ribosomal_uL2_B"/>
    <property type="match status" value="1"/>
</dbReference>
<dbReference type="InterPro" id="IPR012340">
    <property type="entry name" value="NA-bd_OB-fold"/>
</dbReference>
<dbReference type="InterPro" id="IPR014722">
    <property type="entry name" value="Rib_uL2_dom2"/>
</dbReference>
<dbReference type="InterPro" id="IPR002171">
    <property type="entry name" value="Ribosomal_uL2"/>
</dbReference>
<dbReference type="InterPro" id="IPR005880">
    <property type="entry name" value="Ribosomal_uL2_bac/org-type"/>
</dbReference>
<dbReference type="InterPro" id="IPR022669">
    <property type="entry name" value="Ribosomal_uL2_C"/>
</dbReference>
<dbReference type="InterPro" id="IPR022671">
    <property type="entry name" value="Ribosomal_uL2_CS"/>
</dbReference>
<dbReference type="InterPro" id="IPR014726">
    <property type="entry name" value="Ribosomal_uL2_dom3"/>
</dbReference>
<dbReference type="InterPro" id="IPR022666">
    <property type="entry name" value="Ribosomal_uL2_RNA-bd_dom"/>
</dbReference>
<dbReference type="InterPro" id="IPR008991">
    <property type="entry name" value="Translation_prot_SH3-like_sf"/>
</dbReference>
<dbReference type="NCBIfam" id="TIGR01171">
    <property type="entry name" value="rplB_bact"/>
    <property type="match status" value="1"/>
</dbReference>
<dbReference type="PANTHER" id="PTHR13691:SF5">
    <property type="entry name" value="LARGE RIBOSOMAL SUBUNIT PROTEIN UL2M"/>
    <property type="match status" value="1"/>
</dbReference>
<dbReference type="PANTHER" id="PTHR13691">
    <property type="entry name" value="RIBOSOMAL PROTEIN L2"/>
    <property type="match status" value="1"/>
</dbReference>
<dbReference type="Pfam" id="PF00181">
    <property type="entry name" value="Ribosomal_L2"/>
    <property type="match status" value="1"/>
</dbReference>
<dbReference type="Pfam" id="PF03947">
    <property type="entry name" value="Ribosomal_L2_C"/>
    <property type="match status" value="1"/>
</dbReference>
<dbReference type="PIRSF" id="PIRSF002158">
    <property type="entry name" value="Ribosomal_L2"/>
    <property type="match status" value="1"/>
</dbReference>
<dbReference type="SMART" id="SM01383">
    <property type="entry name" value="Ribosomal_L2"/>
    <property type="match status" value="1"/>
</dbReference>
<dbReference type="SMART" id="SM01382">
    <property type="entry name" value="Ribosomal_L2_C"/>
    <property type="match status" value="1"/>
</dbReference>
<dbReference type="SUPFAM" id="SSF50249">
    <property type="entry name" value="Nucleic acid-binding proteins"/>
    <property type="match status" value="1"/>
</dbReference>
<dbReference type="SUPFAM" id="SSF50104">
    <property type="entry name" value="Translation proteins SH3-like domain"/>
    <property type="match status" value="1"/>
</dbReference>
<dbReference type="PROSITE" id="PS00467">
    <property type="entry name" value="RIBOSOMAL_L2"/>
    <property type="match status" value="1"/>
</dbReference>
<evidence type="ECO:0000255" key="1">
    <source>
        <dbReference type="HAMAP-Rule" id="MF_01320"/>
    </source>
</evidence>
<evidence type="ECO:0000256" key="2">
    <source>
        <dbReference type="SAM" id="MobiDB-lite"/>
    </source>
</evidence>
<evidence type="ECO:0000305" key="3"/>
<gene>
    <name evidence="1" type="primary">rplB</name>
    <name type="ordered locus">Sare_4312</name>
</gene>